<proteinExistence type="inferred from homology"/>
<keyword id="KW-0030">Aminoacyl-tRNA synthetase</keyword>
<keyword id="KW-0067">ATP-binding</keyword>
<keyword id="KW-0963">Cytoplasm</keyword>
<keyword id="KW-0436">Ligase</keyword>
<keyword id="KW-0547">Nucleotide-binding</keyword>
<keyword id="KW-0648">Protein biosynthesis</keyword>
<accession>Q8FX81</accession>
<accession>G0KF41</accession>
<name>SYI_BRUSU</name>
<reference key="1">
    <citation type="journal article" date="2002" name="Proc. Natl. Acad. Sci. U.S.A.">
        <title>The Brucella suis genome reveals fundamental similarities between animal and plant pathogens and symbionts.</title>
        <authorList>
            <person name="Paulsen I.T."/>
            <person name="Seshadri R."/>
            <person name="Nelson K.E."/>
            <person name="Eisen J.A."/>
            <person name="Heidelberg J.F."/>
            <person name="Read T.D."/>
            <person name="Dodson R.J."/>
            <person name="Umayam L.A."/>
            <person name="Brinkac L.M."/>
            <person name="Beanan M.J."/>
            <person name="Daugherty S.C."/>
            <person name="DeBoy R.T."/>
            <person name="Durkin A.S."/>
            <person name="Kolonay J.F."/>
            <person name="Madupu R."/>
            <person name="Nelson W.C."/>
            <person name="Ayodeji B."/>
            <person name="Kraul M."/>
            <person name="Shetty J."/>
            <person name="Malek J.A."/>
            <person name="Van Aken S.E."/>
            <person name="Riedmuller S."/>
            <person name="Tettelin H."/>
            <person name="Gill S.R."/>
            <person name="White O."/>
            <person name="Salzberg S.L."/>
            <person name="Hoover D.L."/>
            <person name="Lindler L.E."/>
            <person name="Halling S.M."/>
            <person name="Boyle S.M."/>
            <person name="Fraser C.M."/>
        </authorList>
    </citation>
    <scope>NUCLEOTIDE SEQUENCE [LARGE SCALE GENOMIC DNA]</scope>
    <source>
        <strain>1330</strain>
    </source>
</reference>
<reference key="2">
    <citation type="journal article" date="2011" name="J. Bacteriol.">
        <title>Revised genome sequence of Brucella suis 1330.</title>
        <authorList>
            <person name="Tae H."/>
            <person name="Shallom S."/>
            <person name="Settlage R."/>
            <person name="Preston D."/>
            <person name="Adams L.G."/>
            <person name="Garner H.R."/>
        </authorList>
    </citation>
    <scope>NUCLEOTIDE SEQUENCE [LARGE SCALE GENOMIC DNA]</scope>
    <source>
        <strain>1330</strain>
    </source>
</reference>
<dbReference type="EC" id="6.1.1.5" evidence="1"/>
<dbReference type="EMBL" id="AE014292">
    <property type="protein sequence ID" value="AAN33408.1"/>
    <property type="molecule type" value="Genomic_DNA"/>
</dbReference>
<dbReference type="EMBL" id="CP002998">
    <property type="protein sequence ID" value="AEM19685.1"/>
    <property type="molecule type" value="Genomic_DNA"/>
</dbReference>
<dbReference type="RefSeq" id="WP_006191694.1">
    <property type="nucleotide sequence ID" value="NZ_KN046805.1"/>
</dbReference>
<dbReference type="SMR" id="Q8FX81"/>
<dbReference type="GeneID" id="45053276"/>
<dbReference type="KEGG" id="bms:BRA0202"/>
<dbReference type="KEGG" id="bsi:BS1330_II0199"/>
<dbReference type="PATRIC" id="fig|204722.22.peg.2986"/>
<dbReference type="HOGENOM" id="CLU_001493_7_1_5"/>
<dbReference type="PhylomeDB" id="Q8FX81"/>
<dbReference type="Proteomes" id="UP000007104">
    <property type="component" value="Chromosome II"/>
</dbReference>
<dbReference type="GO" id="GO:0005829">
    <property type="term" value="C:cytosol"/>
    <property type="evidence" value="ECO:0007669"/>
    <property type="project" value="TreeGrafter"/>
</dbReference>
<dbReference type="GO" id="GO:0002161">
    <property type="term" value="F:aminoacyl-tRNA deacylase activity"/>
    <property type="evidence" value="ECO:0007669"/>
    <property type="project" value="InterPro"/>
</dbReference>
<dbReference type="GO" id="GO:0005524">
    <property type="term" value="F:ATP binding"/>
    <property type="evidence" value="ECO:0007669"/>
    <property type="project" value="UniProtKB-UniRule"/>
</dbReference>
<dbReference type="GO" id="GO:0004822">
    <property type="term" value="F:isoleucine-tRNA ligase activity"/>
    <property type="evidence" value="ECO:0007669"/>
    <property type="project" value="UniProtKB-UniRule"/>
</dbReference>
<dbReference type="GO" id="GO:0000049">
    <property type="term" value="F:tRNA binding"/>
    <property type="evidence" value="ECO:0007669"/>
    <property type="project" value="InterPro"/>
</dbReference>
<dbReference type="GO" id="GO:0006428">
    <property type="term" value="P:isoleucyl-tRNA aminoacylation"/>
    <property type="evidence" value="ECO:0007669"/>
    <property type="project" value="UniProtKB-UniRule"/>
</dbReference>
<dbReference type="CDD" id="cd07960">
    <property type="entry name" value="Anticodon_Ia_Ile_BEm"/>
    <property type="match status" value="1"/>
</dbReference>
<dbReference type="FunFam" id="3.40.50.620:FF:000042">
    <property type="entry name" value="Isoleucine--tRNA ligase"/>
    <property type="match status" value="1"/>
</dbReference>
<dbReference type="Gene3D" id="1.10.730.20">
    <property type="match status" value="1"/>
</dbReference>
<dbReference type="Gene3D" id="3.40.50.620">
    <property type="entry name" value="HUPs"/>
    <property type="match status" value="2"/>
</dbReference>
<dbReference type="Gene3D" id="3.90.740.10">
    <property type="entry name" value="Valyl/Leucyl/Isoleucyl-tRNA synthetase, editing domain"/>
    <property type="match status" value="1"/>
</dbReference>
<dbReference type="HAMAP" id="MF_02002">
    <property type="entry name" value="Ile_tRNA_synth_type1"/>
    <property type="match status" value="1"/>
</dbReference>
<dbReference type="InterPro" id="IPR001412">
    <property type="entry name" value="aa-tRNA-synth_I_CS"/>
</dbReference>
<dbReference type="InterPro" id="IPR002300">
    <property type="entry name" value="aa-tRNA-synth_Ia"/>
</dbReference>
<dbReference type="InterPro" id="IPR033708">
    <property type="entry name" value="Anticodon_Ile_BEm"/>
</dbReference>
<dbReference type="InterPro" id="IPR002301">
    <property type="entry name" value="Ile-tRNA-ligase"/>
</dbReference>
<dbReference type="InterPro" id="IPR023585">
    <property type="entry name" value="Ile-tRNA-ligase_type1"/>
</dbReference>
<dbReference type="InterPro" id="IPR050081">
    <property type="entry name" value="Ile-tRNA_ligase"/>
</dbReference>
<dbReference type="InterPro" id="IPR013155">
    <property type="entry name" value="M/V/L/I-tRNA-synth_anticd-bd"/>
</dbReference>
<dbReference type="InterPro" id="IPR014729">
    <property type="entry name" value="Rossmann-like_a/b/a_fold"/>
</dbReference>
<dbReference type="InterPro" id="IPR009080">
    <property type="entry name" value="tRNAsynth_Ia_anticodon-bd"/>
</dbReference>
<dbReference type="InterPro" id="IPR009008">
    <property type="entry name" value="Val/Leu/Ile-tRNA-synth_edit"/>
</dbReference>
<dbReference type="NCBIfam" id="TIGR00392">
    <property type="entry name" value="ileS"/>
    <property type="match status" value="1"/>
</dbReference>
<dbReference type="PANTHER" id="PTHR42765:SF1">
    <property type="entry name" value="ISOLEUCINE--TRNA LIGASE, MITOCHONDRIAL"/>
    <property type="match status" value="1"/>
</dbReference>
<dbReference type="PANTHER" id="PTHR42765">
    <property type="entry name" value="SOLEUCYL-TRNA SYNTHETASE"/>
    <property type="match status" value="1"/>
</dbReference>
<dbReference type="Pfam" id="PF08264">
    <property type="entry name" value="Anticodon_1"/>
    <property type="match status" value="1"/>
</dbReference>
<dbReference type="Pfam" id="PF00133">
    <property type="entry name" value="tRNA-synt_1"/>
    <property type="match status" value="1"/>
</dbReference>
<dbReference type="PRINTS" id="PR00984">
    <property type="entry name" value="TRNASYNTHILE"/>
</dbReference>
<dbReference type="SUPFAM" id="SSF47323">
    <property type="entry name" value="Anticodon-binding domain of a subclass of class I aminoacyl-tRNA synthetases"/>
    <property type="match status" value="1"/>
</dbReference>
<dbReference type="SUPFAM" id="SSF52374">
    <property type="entry name" value="Nucleotidylyl transferase"/>
    <property type="match status" value="1"/>
</dbReference>
<dbReference type="SUPFAM" id="SSF50677">
    <property type="entry name" value="ValRS/IleRS/LeuRS editing domain"/>
    <property type="match status" value="1"/>
</dbReference>
<dbReference type="PROSITE" id="PS00178">
    <property type="entry name" value="AA_TRNA_LIGASE_I"/>
    <property type="match status" value="1"/>
</dbReference>
<protein>
    <recommendedName>
        <fullName evidence="1">Isoleucine--tRNA ligase</fullName>
        <ecNumber evidence="1">6.1.1.5</ecNumber>
    </recommendedName>
    <alternativeName>
        <fullName evidence="1">Isoleucyl-tRNA synthetase</fullName>
        <shortName evidence="1">IleRS</shortName>
    </alternativeName>
</protein>
<comment type="function">
    <text evidence="1">Catalyzes the attachment of isoleucine to tRNA(Ile). As IleRS can inadvertently accommodate and process structurally similar amino acids such as valine, to avoid such errors it has two additional distinct tRNA(Ile)-dependent editing activities. One activity is designated as 'pretransfer' editing and involves the hydrolysis of activated Val-AMP. The other activity is designated 'posttransfer' editing and involves deacylation of mischarged Val-tRNA(Ile).</text>
</comment>
<comment type="catalytic activity">
    <reaction evidence="1">
        <text>tRNA(Ile) + L-isoleucine + ATP = L-isoleucyl-tRNA(Ile) + AMP + diphosphate</text>
        <dbReference type="Rhea" id="RHEA:11060"/>
        <dbReference type="Rhea" id="RHEA-COMP:9666"/>
        <dbReference type="Rhea" id="RHEA-COMP:9695"/>
        <dbReference type="ChEBI" id="CHEBI:30616"/>
        <dbReference type="ChEBI" id="CHEBI:33019"/>
        <dbReference type="ChEBI" id="CHEBI:58045"/>
        <dbReference type="ChEBI" id="CHEBI:78442"/>
        <dbReference type="ChEBI" id="CHEBI:78528"/>
        <dbReference type="ChEBI" id="CHEBI:456215"/>
        <dbReference type="EC" id="6.1.1.5"/>
    </reaction>
</comment>
<comment type="subunit">
    <text evidence="1">Monomer.</text>
</comment>
<comment type="subcellular location">
    <subcellularLocation>
        <location evidence="1">Cytoplasm</location>
    </subcellularLocation>
</comment>
<comment type="domain">
    <text evidence="1">IleRS has two distinct active sites: one for aminoacylation and one for editing. The misactivated valine is translocated from the active site to the editing site, which sterically excludes the correctly activated isoleucine. The single editing site contains two valyl binding pockets, one specific for each substrate (Val-AMP or Val-tRNA(Ile)).</text>
</comment>
<comment type="similarity">
    <text evidence="1">Belongs to the class-I aminoacyl-tRNA synthetase family. IleS type 1 subfamily.</text>
</comment>
<evidence type="ECO:0000255" key="1">
    <source>
        <dbReference type="HAMAP-Rule" id="MF_02002"/>
    </source>
</evidence>
<organism>
    <name type="scientific">Brucella suis biovar 1 (strain 1330)</name>
    <dbReference type="NCBI Taxonomy" id="204722"/>
    <lineage>
        <taxon>Bacteria</taxon>
        <taxon>Pseudomonadati</taxon>
        <taxon>Pseudomonadota</taxon>
        <taxon>Alphaproteobacteria</taxon>
        <taxon>Hyphomicrobiales</taxon>
        <taxon>Brucellaceae</taxon>
        <taxon>Brucella/Ochrobactrum group</taxon>
        <taxon>Brucella</taxon>
    </lineage>
</organism>
<gene>
    <name evidence="1" type="primary">ileS</name>
    <name type="ordered locus">BRA0202</name>
    <name type="ordered locus">BS1330_II0199</name>
</gene>
<sequence length="972" mass="109989">MTDTTKIDYSKTLYLPQTEFPIRAGLPQREPLFVQRWEEMNLYKKLREQAKDRPLYVLHDGPPYANGNIHIGHALNKILKDVITRSFQMRGYNSNYVPGWDCHGLPIEWKIEEKYRAAGKNKDEVPINEFRKECRELASNWIKVQTEEFKRLAILGDFENPYTTMNFHAEARIAGELLKFAASGQLYRGSKPVMWSVVERTALAEAEVEYHDIESDMIWVKFPVAGEVATENDLSGSAVVIWTTTPWTIPGNRAVSYSSRIEYGLFEITEAENDFGPRPGERLVFADKLVEECCAKAKLQFKRLRSVSAEELGKIVLDHPLKGFGGGYEFVVPMLDGDHVTDDAGTGFVHTAPSHGREDFEAWMDNARQLEARGIDPNIPFPVGDDGFYTKDAPGFGPDREGGPARVIDDNGKKGDANKVVIEQLIAADKLFARGRLKHSYPHSWRSKKPVIFRNTPQWFVYMDKNLGDGTTLRSRALKAIDETRFVPAAGQTRLRSMIEGRPDWVLSRQRAWGVPICVFVDEEGNILQDDAVNKRIMDAFEKEGADAWFADGARERFLGARAGEGWTQVRDILDVWFDSGSTHTFTLEDRPDLKWPADVYLEGSDQHRGWFHSSLLESCGTRGRAPYNAVVTHGFTMDEHGKKMSKSLGNTVTPQDVIKESGADILRLWVMTTDYWEDQRLGKSIIQTNIDAYRKLRNTIRWMLGTLAHDEGENVAYADLPELERLMLHRLTELDELVRSGYDTFDFKRIARALVDFMNVELSAFYFDIRKDALYCDAPSSIRRKAALQTVREIFVRLTTWLAPMLPFTMEEAWLDRYPQSVSIHAEQFRPTPAEWRDDVLAEKWRKVRAVRRVVTGALELERADKRIGSSLEAAPVVYIADKSLSDSLEGLDFAEICITSGISVSDAAAPEGAFTLGDVKGVAVVPERAKGEKCARSWRYTTDVGADPEFPEVSARDAAALRELQALGKL</sequence>
<feature type="chain" id="PRO_0000098364" description="Isoleucine--tRNA ligase">
    <location>
        <begin position="1"/>
        <end position="972"/>
    </location>
</feature>
<feature type="short sequence motif" description="'HIGH' region">
    <location>
        <begin position="63"/>
        <end position="73"/>
    </location>
</feature>
<feature type="short sequence motif" description="'KMSKS' region">
    <location>
        <begin position="644"/>
        <end position="648"/>
    </location>
</feature>
<feature type="binding site" evidence="1">
    <location>
        <position position="603"/>
    </location>
    <ligand>
        <name>L-isoleucyl-5'-AMP</name>
        <dbReference type="ChEBI" id="CHEBI:178002"/>
    </ligand>
</feature>
<feature type="binding site" evidence="1">
    <location>
        <position position="647"/>
    </location>
    <ligand>
        <name>ATP</name>
        <dbReference type="ChEBI" id="CHEBI:30616"/>
    </ligand>
</feature>